<organism>
    <name type="scientific">Bacillus cereus (strain ATCC 14579 / DSM 31 / CCUG 7414 / JCM 2152 / NBRC 15305 / NCIMB 9373 / NCTC 2599 / NRRL B-3711)</name>
    <dbReference type="NCBI Taxonomy" id="226900"/>
    <lineage>
        <taxon>Bacteria</taxon>
        <taxon>Bacillati</taxon>
        <taxon>Bacillota</taxon>
        <taxon>Bacilli</taxon>
        <taxon>Bacillales</taxon>
        <taxon>Bacillaceae</taxon>
        <taxon>Bacillus</taxon>
        <taxon>Bacillus cereus group</taxon>
    </lineage>
</organism>
<gene>
    <name type="ordered locus">BC_0921</name>
</gene>
<accession>Q81H98</accession>
<keyword id="KW-0963">Cytoplasm</keyword>
<keyword id="KW-1185">Reference proteome</keyword>
<comment type="function">
    <text evidence="1 2">Immunity component of an LXG toxin-immunity module. Neutralizes the RNase activity of cognate toxin BC_0920. Probably does not have immunity protein activity on other toxins with the LXG domain.</text>
</comment>
<comment type="subunit">
    <text evidence="3">Probably interacts with cognate toxin BC_0920 but not with other non-cognate toxins. The interaction inhibits the toxic activity of BC_0920 (Probable).</text>
</comment>
<comment type="subcellular location">
    <subcellularLocation>
        <location evidence="3">Cytoplasm</location>
    </subcellularLocation>
</comment>
<name>ATOX1_BACCR</name>
<dbReference type="EMBL" id="AE016877">
    <property type="protein sequence ID" value="AAP07908.1"/>
    <property type="molecule type" value="Genomic_DNA"/>
</dbReference>
<dbReference type="RefSeq" id="NP_830707.1">
    <property type="nucleotide sequence ID" value="NC_004722.1"/>
</dbReference>
<dbReference type="RefSeq" id="WP_000877046.1">
    <property type="nucleotide sequence ID" value="NZ_CP138336.1"/>
</dbReference>
<dbReference type="SMR" id="Q81H98"/>
<dbReference type="STRING" id="226900.BC_0921"/>
<dbReference type="KEGG" id="bce:BC0921"/>
<dbReference type="PATRIC" id="fig|226900.8.peg.869"/>
<dbReference type="HOGENOM" id="CLU_166653_0_0_9"/>
<dbReference type="OrthoDB" id="2882689at2"/>
<dbReference type="Proteomes" id="UP000001417">
    <property type="component" value="Chromosome"/>
</dbReference>
<dbReference type="GO" id="GO:0005737">
    <property type="term" value="C:cytoplasm"/>
    <property type="evidence" value="ECO:0007669"/>
    <property type="project" value="UniProtKB-SubCell"/>
</dbReference>
<reference key="1">
    <citation type="journal article" date="2003" name="Nature">
        <title>Genome sequence of Bacillus cereus and comparative analysis with Bacillus anthracis.</title>
        <authorList>
            <person name="Ivanova N."/>
            <person name="Sorokin A."/>
            <person name="Anderson I."/>
            <person name="Galleron N."/>
            <person name="Candelon B."/>
            <person name="Kapatral V."/>
            <person name="Bhattacharyya A."/>
            <person name="Reznik G."/>
            <person name="Mikhailova N."/>
            <person name="Lapidus A."/>
            <person name="Chu L."/>
            <person name="Mazur M."/>
            <person name="Goltsman E."/>
            <person name="Larsen N."/>
            <person name="D'Souza M."/>
            <person name="Walunas T."/>
            <person name="Grechkin Y."/>
            <person name="Pusch G."/>
            <person name="Haselkorn R."/>
            <person name="Fonstein M."/>
            <person name="Ehrlich S.D."/>
            <person name="Overbeek R."/>
            <person name="Kyrpides N.C."/>
        </authorList>
    </citation>
    <scope>NUCLEOTIDE SEQUENCE [LARGE SCALE GENOMIC DNA]</scope>
    <source>
        <strain>ATCC 14579 / DSM 31 / CCUG 7414 / JCM 2152 / NBRC 15305 / NCIMB 9373 / NCTC 2599 / NRRL B-3711</strain>
    </source>
</reference>
<reference key="2">
    <citation type="journal article" date="2012" name="FEBS Lett.">
        <title>A novel family of toxin/antitoxin proteins in Bacillus species.</title>
        <authorList>
            <person name="Holberger L.E."/>
            <person name="Garza-Sanchez F."/>
            <person name="Lamoureux J."/>
            <person name="Low D.A."/>
            <person name="Hayes C.S."/>
        </authorList>
    </citation>
    <scope>FUNCTION AS AN IMMUNITY PROTEIN</scope>
    <scope>EXPRESSION IN E.COLI</scope>
    <source>
        <strain>ATCC 14579 / DSM 31 / CCUG 7414 / JCM 2152 / NBRC 15305 / NCIMB 9373 / NCTC 2599 / NRRL B-3711</strain>
    </source>
</reference>
<reference key="3">
    <citation type="journal article" date="2018" name="Mol. Microbiol.">
        <title>Functional plasticity of antibacterial EndoU toxins.</title>
        <authorList>
            <person name="Michalska K."/>
            <person name="Quan Nhan D."/>
            <person name="Willett J.L.E."/>
            <person name="Stols L.M."/>
            <person name="Eschenfeldt W.H."/>
            <person name="Jones A.M."/>
            <person name="Nguyen J.Y."/>
            <person name="Koskiniemi S."/>
            <person name="Low D.A."/>
            <person name="Goulding C.W."/>
            <person name="Joachimiak A."/>
            <person name="Hayes C.S."/>
        </authorList>
    </citation>
    <scope>FUNCTION</scope>
    <source>
        <strain>ATCC 14579 / DSM 31 / CCUG 7414 / JCM 2152 / NBRC 15305 / NCIMB 9373 / NCTC 2599 / NRRL B-3711</strain>
    </source>
</reference>
<protein>
    <recommendedName>
        <fullName>Immunity protein BC_0921</fullName>
    </recommendedName>
</protein>
<evidence type="ECO:0000269" key="1">
    <source>
    </source>
</evidence>
<evidence type="ECO:0000269" key="2">
    <source>
    </source>
</evidence>
<evidence type="ECO:0000305" key="3"/>
<proteinExistence type="evidence at protein level"/>
<sequence>MKYPYSFEVLTNGKLVMRLPQEIKLMETFLGVEVSAFGDWILEEIHSVLNGKENYVVVNGNICGLEIRKDTTTVLDNLAEDGKGDFCEIETIELVDLIHIWQDKQKEFKKGKNKELK</sequence>
<feature type="chain" id="PRO_0000424069" description="Immunity protein BC_0921">
    <location>
        <begin position="1"/>
        <end position="117"/>
    </location>
</feature>